<organism>
    <name type="scientific">Enterococcus faecalis (strain ATCC 700802 / V583)</name>
    <dbReference type="NCBI Taxonomy" id="226185"/>
    <lineage>
        <taxon>Bacteria</taxon>
        <taxon>Bacillati</taxon>
        <taxon>Bacillota</taxon>
        <taxon>Bacilli</taxon>
        <taxon>Lactobacillales</taxon>
        <taxon>Enterococcaceae</taxon>
        <taxon>Enterococcus</taxon>
    </lineage>
</organism>
<accession>Q831A8</accession>
<name>MURA2_ENTFA</name>
<evidence type="ECO:0000255" key="1">
    <source>
        <dbReference type="HAMAP-Rule" id="MF_00111"/>
    </source>
</evidence>
<dbReference type="EC" id="2.5.1.7" evidence="1"/>
<dbReference type="EMBL" id="AE016830">
    <property type="protein sequence ID" value="AAO82314.1"/>
    <property type="molecule type" value="Genomic_DNA"/>
</dbReference>
<dbReference type="RefSeq" id="NP_816244.1">
    <property type="nucleotide sequence ID" value="NC_004668.1"/>
</dbReference>
<dbReference type="SMR" id="Q831A8"/>
<dbReference type="STRING" id="226185.EF_2605"/>
<dbReference type="DrugCentral" id="Q831A8"/>
<dbReference type="EnsemblBacteria" id="AAO82314">
    <property type="protein sequence ID" value="AAO82314"/>
    <property type="gene ID" value="EF_2605"/>
</dbReference>
<dbReference type="KEGG" id="efa:EF2605"/>
<dbReference type="PATRIC" id="fig|226185.45.peg.951"/>
<dbReference type="eggNOG" id="COG0766">
    <property type="taxonomic scope" value="Bacteria"/>
</dbReference>
<dbReference type="HOGENOM" id="CLU_027387_0_0_9"/>
<dbReference type="UniPathway" id="UPA00219"/>
<dbReference type="Proteomes" id="UP000001415">
    <property type="component" value="Chromosome"/>
</dbReference>
<dbReference type="GO" id="GO:0005737">
    <property type="term" value="C:cytoplasm"/>
    <property type="evidence" value="ECO:0007669"/>
    <property type="project" value="UniProtKB-SubCell"/>
</dbReference>
<dbReference type="GO" id="GO:0008760">
    <property type="term" value="F:UDP-N-acetylglucosamine 1-carboxyvinyltransferase activity"/>
    <property type="evidence" value="ECO:0007669"/>
    <property type="project" value="UniProtKB-UniRule"/>
</dbReference>
<dbReference type="GO" id="GO:0051301">
    <property type="term" value="P:cell division"/>
    <property type="evidence" value="ECO:0007669"/>
    <property type="project" value="UniProtKB-KW"/>
</dbReference>
<dbReference type="GO" id="GO:0071555">
    <property type="term" value="P:cell wall organization"/>
    <property type="evidence" value="ECO:0007669"/>
    <property type="project" value="UniProtKB-KW"/>
</dbReference>
<dbReference type="GO" id="GO:0009252">
    <property type="term" value="P:peptidoglycan biosynthetic process"/>
    <property type="evidence" value="ECO:0007669"/>
    <property type="project" value="UniProtKB-UniRule"/>
</dbReference>
<dbReference type="GO" id="GO:0008360">
    <property type="term" value="P:regulation of cell shape"/>
    <property type="evidence" value="ECO:0007669"/>
    <property type="project" value="UniProtKB-KW"/>
</dbReference>
<dbReference type="GO" id="GO:0019277">
    <property type="term" value="P:UDP-N-acetylgalactosamine biosynthetic process"/>
    <property type="evidence" value="ECO:0007669"/>
    <property type="project" value="InterPro"/>
</dbReference>
<dbReference type="CDD" id="cd01555">
    <property type="entry name" value="UdpNAET"/>
    <property type="match status" value="1"/>
</dbReference>
<dbReference type="FunFam" id="3.65.10.10:FF:000001">
    <property type="entry name" value="UDP-N-acetylglucosamine 1-carboxyvinyltransferase"/>
    <property type="match status" value="1"/>
</dbReference>
<dbReference type="Gene3D" id="3.65.10.10">
    <property type="entry name" value="Enolpyruvate transferase domain"/>
    <property type="match status" value="2"/>
</dbReference>
<dbReference type="HAMAP" id="MF_00111">
    <property type="entry name" value="MurA"/>
    <property type="match status" value="1"/>
</dbReference>
<dbReference type="InterPro" id="IPR001986">
    <property type="entry name" value="Enolpyruvate_Tfrase_dom"/>
</dbReference>
<dbReference type="InterPro" id="IPR036968">
    <property type="entry name" value="Enolpyruvate_Tfrase_sf"/>
</dbReference>
<dbReference type="InterPro" id="IPR050068">
    <property type="entry name" value="MurA_subfamily"/>
</dbReference>
<dbReference type="InterPro" id="IPR013792">
    <property type="entry name" value="RNA3'P_cycl/enolpyr_Trfase_a/b"/>
</dbReference>
<dbReference type="InterPro" id="IPR005750">
    <property type="entry name" value="UDP_GlcNAc_COvinyl_MurA"/>
</dbReference>
<dbReference type="NCBIfam" id="TIGR01072">
    <property type="entry name" value="murA"/>
    <property type="match status" value="1"/>
</dbReference>
<dbReference type="NCBIfam" id="NF006873">
    <property type="entry name" value="PRK09369.1"/>
    <property type="match status" value="1"/>
</dbReference>
<dbReference type="PANTHER" id="PTHR43783">
    <property type="entry name" value="UDP-N-ACETYLGLUCOSAMINE 1-CARBOXYVINYLTRANSFERASE"/>
    <property type="match status" value="1"/>
</dbReference>
<dbReference type="PANTHER" id="PTHR43783:SF1">
    <property type="entry name" value="UDP-N-ACETYLGLUCOSAMINE 1-CARBOXYVINYLTRANSFERASE"/>
    <property type="match status" value="1"/>
</dbReference>
<dbReference type="Pfam" id="PF00275">
    <property type="entry name" value="EPSP_synthase"/>
    <property type="match status" value="1"/>
</dbReference>
<dbReference type="SUPFAM" id="SSF55205">
    <property type="entry name" value="EPT/RTPC-like"/>
    <property type="match status" value="1"/>
</dbReference>
<gene>
    <name evidence="1" type="primary">murA2</name>
    <name type="synonym">murAA</name>
    <name type="ordered locus">EF_2605</name>
</gene>
<keyword id="KW-0131">Cell cycle</keyword>
<keyword id="KW-0132">Cell division</keyword>
<keyword id="KW-0133">Cell shape</keyword>
<keyword id="KW-0961">Cell wall biogenesis/degradation</keyword>
<keyword id="KW-0963">Cytoplasm</keyword>
<keyword id="KW-0573">Peptidoglycan synthesis</keyword>
<keyword id="KW-0670">Pyruvate</keyword>
<keyword id="KW-1185">Reference proteome</keyword>
<keyword id="KW-0808">Transferase</keyword>
<reference key="1">
    <citation type="journal article" date="2003" name="Science">
        <title>Role of mobile DNA in the evolution of vancomycin-resistant Enterococcus faecalis.</title>
        <authorList>
            <person name="Paulsen I.T."/>
            <person name="Banerjei L."/>
            <person name="Myers G.S.A."/>
            <person name="Nelson K.E."/>
            <person name="Seshadri R."/>
            <person name="Read T.D."/>
            <person name="Fouts D.E."/>
            <person name="Eisen J.A."/>
            <person name="Gill S.R."/>
            <person name="Heidelberg J.F."/>
            <person name="Tettelin H."/>
            <person name="Dodson R.J."/>
            <person name="Umayam L.A."/>
            <person name="Brinkac L.M."/>
            <person name="Beanan M.J."/>
            <person name="Daugherty S.C."/>
            <person name="DeBoy R.T."/>
            <person name="Durkin S.A."/>
            <person name="Kolonay J.F."/>
            <person name="Madupu R."/>
            <person name="Nelson W.C."/>
            <person name="Vamathevan J.J."/>
            <person name="Tran B."/>
            <person name="Upton J."/>
            <person name="Hansen T."/>
            <person name="Shetty J."/>
            <person name="Khouri H.M."/>
            <person name="Utterback T.R."/>
            <person name="Radune D."/>
            <person name="Ketchum K.A."/>
            <person name="Dougherty B.A."/>
            <person name="Fraser C.M."/>
        </authorList>
    </citation>
    <scope>NUCLEOTIDE SEQUENCE [LARGE SCALE GENOMIC DNA]</scope>
    <source>
        <strain>ATCC 700802 / V583</strain>
    </source>
</reference>
<proteinExistence type="inferred from homology"/>
<comment type="function">
    <text evidence="1">Cell wall formation. Adds enolpyruvyl to UDP-N-acetylglucosamine.</text>
</comment>
<comment type="catalytic activity">
    <reaction evidence="1">
        <text>phosphoenolpyruvate + UDP-N-acetyl-alpha-D-glucosamine = UDP-N-acetyl-3-O-(1-carboxyvinyl)-alpha-D-glucosamine + phosphate</text>
        <dbReference type="Rhea" id="RHEA:18681"/>
        <dbReference type="ChEBI" id="CHEBI:43474"/>
        <dbReference type="ChEBI" id="CHEBI:57705"/>
        <dbReference type="ChEBI" id="CHEBI:58702"/>
        <dbReference type="ChEBI" id="CHEBI:68483"/>
        <dbReference type="EC" id="2.5.1.7"/>
    </reaction>
</comment>
<comment type="pathway">
    <text evidence="1">Cell wall biogenesis; peptidoglycan biosynthesis.</text>
</comment>
<comment type="subcellular location">
    <subcellularLocation>
        <location evidence="1">Cytoplasm</location>
    </subcellularLocation>
</comment>
<comment type="similarity">
    <text evidence="1">Belongs to the EPSP synthase family. MurA subfamily.</text>
</comment>
<feature type="chain" id="PRO_0000231203" description="UDP-N-acetylglucosamine 1-carboxyvinyltransferase 2">
    <location>
        <begin position="1"/>
        <end position="433"/>
    </location>
</feature>
<feature type="active site" description="Proton donor" evidence="1">
    <location>
        <position position="120"/>
    </location>
</feature>
<feature type="binding site" evidence="1">
    <location>
        <begin position="23"/>
        <end position="24"/>
    </location>
    <ligand>
        <name>phosphoenolpyruvate</name>
        <dbReference type="ChEBI" id="CHEBI:58702"/>
    </ligand>
</feature>
<feature type="binding site" evidence="1">
    <location>
        <position position="96"/>
    </location>
    <ligand>
        <name>UDP-N-acetyl-alpha-D-glucosamine</name>
        <dbReference type="ChEBI" id="CHEBI:57705"/>
    </ligand>
</feature>
<feature type="binding site" evidence="1">
    <location>
        <begin position="125"/>
        <end position="129"/>
    </location>
    <ligand>
        <name>UDP-N-acetyl-alpha-D-glucosamine</name>
        <dbReference type="ChEBI" id="CHEBI:57705"/>
    </ligand>
</feature>
<feature type="binding site" evidence="1">
    <location>
        <position position="308"/>
    </location>
    <ligand>
        <name>UDP-N-acetyl-alpha-D-glucosamine</name>
        <dbReference type="ChEBI" id="CHEBI:57705"/>
    </ligand>
</feature>
<feature type="binding site" evidence="1">
    <location>
        <position position="330"/>
    </location>
    <ligand>
        <name>UDP-N-acetyl-alpha-D-glucosamine</name>
        <dbReference type="ChEBI" id="CHEBI:57705"/>
    </ligand>
</feature>
<feature type="modified residue" description="2-(S-cysteinyl)pyruvic acid O-phosphothioketal" evidence="1">
    <location>
        <position position="120"/>
    </location>
</feature>
<sequence>MEQIIVHGGNTKLEGTVKIEGAKNAVLPILAATLLAEEGVTTLKNVPILSDVFTMNQVIKHLNVAIDFDEDANEVTIDATQPLGIEANYEYVSKMRASIVVMGPLLARNGHAKVAMPGGCAIGKRPIDLHLKGFQALGAKIIQKNGYIEAIADELIGNTIYLDFPSVGATQNIMMAAVRAKGTTIIENVAREPEIVDLANILNKMGANVIGAGTETMRIEGVDKLHAVEHSIVQDRIEAGTFMVAAAMTEGNVLIEEAISEHNRPLISKLTEMGAIIEEEENGIRVIGPKHLKPTDVKTMPHPGFPTDMQAQMTAIQMFAEGTSIVTETVFENRYQHLEEMRRMNADLKIDGNIAVINGGNELQGAAVEATDLRAAAALILVGLRANGITRVSNLKYLDRGYYEFHKKLQKLGANVERVNDEKIEEKQATTVI</sequence>
<protein>
    <recommendedName>
        <fullName evidence="1">UDP-N-acetylglucosamine 1-carboxyvinyltransferase 2</fullName>
        <ecNumber evidence="1">2.5.1.7</ecNumber>
    </recommendedName>
    <alternativeName>
        <fullName evidence="1">Enoylpyruvate transferase 2</fullName>
    </alternativeName>
    <alternativeName>
        <fullName evidence="1">UDP-N-acetylglucosamine enolpyruvyl transferase 2</fullName>
        <shortName evidence="1">EPT 2</shortName>
    </alternativeName>
</protein>